<gene>
    <name evidence="1" type="primary">tolB</name>
    <name type="ordered locus">Gmet_3540</name>
</gene>
<keyword id="KW-0131">Cell cycle</keyword>
<keyword id="KW-0132">Cell division</keyword>
<keyword id="KW-0574">Periplasm</keyword>
<keyword id="KW-1185">Reference proteome</keyword>
<keyword id="KW-0732">Signal</keyword>
<comment type="function">
    <text evidence="1">Part of the Tol-Pal system, which plays a role in outer membrane invagination during cell division and is important for maintaining outer membrane integrity.</text>
</comment>
<comment type="subunit">
    <text evidence="1">The Tol-Pal system is composed of five core proteins: the inner membrane proteins TolA, TolQ and TolR, the periplasmic protein TolB and the outer membrane protein Pal. They form a network linking the inner and outer membranes and the peptidoglycan layer.</text>
</comment>
<comment type="subcellular location">
    <subcellularLocation>
        <location evidence="1">Periplasm</location>
    </subcellularLocation>
</comment>
<comment type="similarity">
    <text evidence="1">Belongs to the TolB family.</text>
</comment>
<name>TOLB_GEOMG</name>
<sequence length="429" mass="46908">MTRRLFILITIMLCLIPALLHSQEGYREVTAAGTHKLTLTVDSPRRLGGSDAPQVARETAEALQFDMVLAGPFTVTAPSAAAASAGIRPGEFDFAPWRGAGVDLLVKSGYTVTGNAMTMEFRLYNVTQGKEILAKRYTGRPGDVRRIAHTFSDDIMAALTGERGPFTGKIAFVSTRAGAKAIFLMDYDGHNVQQLTKNRSINLNPDFSPSGKEIIFTSYRQGNPDLFRRELFTGAEARISSYRGINATGAWSPDGKTIALTLSKDGNSEIYTISRDGKNPHRLTNTSAIEVSPAWSPDVRKIVFVSDRLGKPQIFIMNADGTGVRRLTTSGNYNVSPRWSPKGDRIVYSRQEGGFQIYAINPDGTNDTRLTSEGSNEHPRWSPDGRFITFSSTRGGGEGIYVMRADGSGQTRVSGGKGRDSHPTWSPRW</sequence>
<protein>
    <recommendedName>
        <fullName evidence="1">Tol-Pal system protein TolB</fullName>
    </recommendedName>
</protein>
<organism>
    <name type="scientific">Geobacter metallireducens (strain ATCC 53774 / DSM 7210 / GS-15)</name>
    <dbReference type="NCBI Taxonomy" id="269799"/>
    <lineage>
        <taxon>Bacteria</taxon>
        <taxon>Pseudomonadati</taxon>
        <taxon>Thermodesulfobacteriota</taxon>
        <taxon>Desulfuromonadia</taxon>
        <taxon>Geobacterales</taxon>
        <taxon>Geobacteraceae</taxon>
        <taxon>Geobacter</taxon>
    </lineage>
</organism>
<evidence type="ECO:0000255" key="1">
    <source>
        <dbReference type="HAMAP-Rule" id="MF_00671"/>
    </source>
</evidence>
<evidence type="ECO:0000256" key="2">
    <source>
        <dbReference type="SAM" id="MobiDB-lite"/>
    </source>
</evidence>
<reference key="1">
    <citation type="journal article" date="2009" name="BMC Microbiol.">
        <title>The genome sequence of Geobacter metallireducens: features of metabolism, physiology and regulation common and dissimilar to Geobacter sulfurreducens.</title>
        <authorList>
            <person name="Aklujkar M."/>
            <person name="Krushkal J."/>
            <person name="DiBartolo G."/>
            <person name="Lapidus A."/>
            <person name="Land M.L."/>
            <person name="Lovley D.R."/>
        </authorList>
    </citation>
    <scope>NUCLEOTIDE SEQUENCE [LARGE SCALE GENOMIC DNA]</scope>
    <source>
        <strain>ATCC 53774 / DSM 7210 / GS-15</strain>
    </source>
</reference>
<dbReference type="EMBL" id="CP000148">
    <property type="protein sequence ID" value="ABB33745.1"/>
    <property type="molecule type" value="Genomic_DNA"/>
</dbReference>
<dbReference type="RefSeq" id="WP_004513696.1">
    <property type="nucleotide sequence ID" value="NC_007517.1"/>
</dbReference>
<dbReference type="SMR" id="Q39PS9"/>
<dbReference type="STRING" id="269799.Gmet_3540"/>
<dbReference type="DNASU" id="3739799"/>
<dbReference type="KEGG" id="gme:Gmet_3540"/>
<dbReference type="eggNOG" id="COG0823">
    <property type="taxonomic scope" value="Bacteria"/>
</dbReference>
<dbReference type="HOGENOM" id="CLU_047123_2_0_7"/>
<dbReference type="Proteomes" id="UP000007073">
    <property type="component" value="Chromosome"/>
</dbReference>
<dbReference type="GO" id="GO:0042597">
    <property type="term" value="C:periplasmic space"/>
    <property type="evidence" value="ECO:0007669"/>
    <property type="project" value="UniProtKB-SubCell"/>
</dbReference>
<dbReference type="GO" id="GO:0051301">
    <property type="term" value="P:cell division"/>
    <property type="evidence" value="ECO:0007669"/>
    <property type="project" value="UniProtKB-KW"/>
</dbReference>
<dbReference type="GO" id="GO:0017038">
    <property type="term" value="P:protein import"/>
    <property type="evidence" value="ECO:0007669"/>
    <property type="project" value="InterPro"/>
</dbReference>
<dbReference type="Gene3D" id="2.120.10.30">
    <property type="entry name" value="TolB, C-terminal domain"/>
    <property type="match status" value="2"/>
</dbReference>
<dbReference type="Gene3D" id="3.40.50.10070">
    <property type="entry name" value="TolB, N-terminal domain"/>
    <property type="match status" value="1"/>
</dbReference>
<dbReference type="Gene3D" id="2.120.10.60">
    <property type="entry name" value="Tricorn protease N-terminal domain"/>
    <property type="match status" value="1"/>
</dbReference>
<dbReference type="HAMAP" id="MF_00671">
    <property type="entry name" value="TolB"/>
    <property type="match status" value="1"/>
</dbReference>
<dbReference type="InterPro" id="IPR011042">
    <property type="entry name" value="6-blade_b-propeller_TolB-like"/>
</dbReference>
<dbReference type="InterPro" id="IPR011659">
    <property type="entry name" value="PD40"/>
</dbReference>
<dbReference type="InterPro" id="IPR014167">
    <property type="entry name" value="Tol-Pal_TolB"/>
</dbReference>
<dbReference type="InterPro" id="IPR007195">
    <property type="entry name" value="TolB_N"/>
</dbReference>
<dbReference type="NCBIfam" id="TIGR02800">
    <property type="entry name" value="propeller_TolB"/>
    <property type="match status" value="1"/>
</dbReference>
<dbReference type="PANTHER" id="PTHR36842:SF1">
    <property type="entry name" value="PROTEIN TOLB"/>
    <property type="match status" value="1"/>
</dbReference>
<dbReference type="PANTHER" id="PTHR36842">
    <property type="entry name" value="PROTEIN TOLB HOMOLOG"/>
    <property type="match status" value="1"/>
</dbReference>
<dbReference type="Pfam" id="PF07676">
    <property type="entry name" value="PD40"/>
    <property type="match status" value="5"/>
</dbReference>
<dbReference type="Pfam" id="PF04052">
    <property type="entry name" value="TolB_N"/>
    <property type="match status" value="1"/>
</dbReference>
<dbReference type="SUPFAM" id="SSF52964">
    <property type="entry name" value="TolB, N-terminal domain"/>
    <property type="match status" value="1"/>
</dbReference>
<dbReference type="SUPFAM" id="SSF69304">
    <property type="entry name" value="Tricorn protease N-terminal domain"/>
    <property type="match status" value="1"/>
</dbReference>
<feature type="signal peptide" evidence="1">
    <location>
        <begin position="1"/>
        <end position="22"/>
    </location>
</feature>
<feature type="chain" id="PRO_0000259050" description="Tol-Pal system protein TolB" evidence="1">
    <location>
        <begin position="23"/>
        <end position="429"/>
    </location>
</feature>
<feature type="region of interest" description="Disordered" evidence="2">
    <location>
        <begin position="362"/>
        <end position="383"/>
    </location>
</feature>
<feature type="region of interest" description="Disordered" evidence="2">
    <location>
        <begin position="407"/>
        <end position="429"/>
    </location>
</feature>
<feature type="compositionally biased region" description="Polar residues" evidence="2">
    <location>
        <begin position="363"/>
        <end position="374"/>
    </location>
</feature>
<proteinExistence type="inferred from homology"/>
<accession>Q39PS9</accession>